<dbReference type="EC" id="7.1.1.9"/>
<dbReference type="EMBL" id="DQ019090">
    <property type="protein sequence ID" value="ABA28362.1"/>
    <property type="molecule type" value="Genomic_DNA"/>
</dbReference>
<dbReference type="SMR" id="Q38S38"/>
<dbReference type="GO" id="GO:0005743">
    <property type="term" value="C:mitochondrial inner membrane"/>
    <property type="evidence" value="ECO:0007669"/>
    <property type="project" value="UniProtKB-SubCell"/>
</dbReference>
<dbReference type="GO" id="GO:0045277">
    <property type="term" value="C:respiratory chain complex IV"/>
    <property type="evidence" value="ECO:0000250"/>
    <property type="project" value="UniProtKB"/>
</dbReference>
<dbReference type="GO" id="GO:0005507">
    <property type="term" value="F:copper ion binding"/>
    <property type="evidence" value="ECO:0007669"/>
    <property type="project" value="InterPro"/>
</dbReference>
<dbReference type="GO" id="GO:0004129">
    <property type="term" value="F:cytochrome-c oxidase activity"/>
    <property type="evidence" value="ECO:0007669"/>
    <property type="project" value="UniProtKB-EC"/>
</dbReference>
<dbReference type="GO" id="GO:0042773">
    <property type="term" value="P:ATP synthesis coupled electron transport"/>
    <property type="evidence" value="ECO:0007669"/>
    <property type="project" value="TreeGrafter"/>
</dbReference>
<dbReference type="CDD" id="cd13912">
    <property type="entry name" value="CcO_II_C"/>
    <property type="match status" value="1"/>
</dbReference>
<dbReference type="FunFam" id="1.10.287.90:FF:000001">
    <property type="entry name" value="Cytochrome c oxidase subunit 2"/>
    <property type="match status" value="1"/>
</dbReference>
<dbReference type="FunFam" id="2.60.40.420:FF:000001">
    <property type="entry name" value="Cytochrome c oxidase subunit 2"/>
    <property type="match status" value="1"/>
</dbReference>
<dbReference type="Gene3D" id="1.10.287.90">
    <property type="match status" value="1"/>
</dbReference>
<dbReference type="Gene3D" id="2.60.40.420">
    <property type="entry name" value="Cupredoxins - blue copper proteins"/>
    <property type="match status" value="1"/>
</dbReference>
<dbReference type="InterPro" id="IPR045187">
    <property type="entry name" value="CcO_II"/>
</dbReference>
<dbReference type="InterPro" id="IPR002429">
    <property type="entry name" value="CcO_II-like_C"/>
</dbReference>
<dbReference type="InterPro" id="IPR034210">
    <property type="entry name" value="CcO_II_C"/>
</dbReference>
<dbReference type="InterPro" id="IPR001505">
    <property type="entry name" value="Copper_CuA"/>
</dbReference>
<dbReference type="InterPro" id="IPR008972">
    <property type="entry name" value="Cupredoxin"/>
</dbReference>
<dbReference type="InterPro" id="IPR014222">
    <property type="entry name" value="Cyt_c_oxidase_su2"/>
</dbReference>
<dbReference type="InterPro" id="IPR011759">
    <property type="entry name" value="Cyt_c_oxidase_su2_TM_dom"/>
</dbReference>
<dbReference type="InterPro" id="IPR036257">
    <property type="entry name" value="Cyt_c_oxidase_su2_TM_sf"/>
</dbReference>
<dbReference type="NCBIfam" id="TIGR02866">
    <property type="entry name" value="CoxB"/>
    <property type="match status" value="1"/>
</dbReference>
<dbReference type="PANTHER" id="PTHR22888:SF9">
    <property type="entry name" value="CYTOCHROME C OXIDASE SUBUNIT 2"/>
    <property type="match status" value="1"/>
</dbReference>
<dbReference type="PANTHER" id="PTHR22888">
    <property type="entry name" value="CYTOCHROME C OXIDASE, SUBUNIT II"/>
    <property type="match status" value="1"/>
</dbReference>
<dbReference type="Pfam" id="PF00116">
    <property type="entry name" value="COX2"/>
    <property type="match status" value="1"/>
</dbReference>
<dbReference type="Pfam" id="PF02790">
    <property type="entry name" value="COX2_TM"/>
    <property type="match status" value="1"/>
</dbReference>
<dbReference type="PRINTS" id="PR01166">
    <property type="entry name" value="CYCOXIDASEII"/>
</dbReference>
<dbReference type="SUPFAM" id="SSF49503">
    <property type="entry name" value="Cupredoxins"/>
    <property type="match status" value="1"/>
</dbReference>
<dbReference type="SUPFAM" id="SSF81464">
    <property type="entry name" value="Cytochrome c oxidase subunit II-like, transmembrane region"/>
    <property type="match status" value="1"/>
</dbReference>
<dbReference type="PROSITE" id="PS00078">
    <property type="entry name" value="COX2"/>
    <property type="match status" value="1"/>
</dbReference>
<dbReference type="PROSITE" id="PS50857">
    <property type="entry name" value="COX2_CUA"/>
    <property type="match status" value="1"/>
</dbReference>
<dbReference type="PROSITE" id="PS50999">
    <property type="entry name" value="COX2_TM"/>
    <property type="match status" value="1"/>
</dbReference>
<name>COX2_ANIIM</name>
<proteinExistence type="inferred from homology"/>
<organism>
    <name type="scientific">Anisomys imitator</name>
    <name type="common">Uneven-toothed rat</name>
    <dbReference type="NCBI Taxonomy" id="332661"/>
    <lineage>
        <taxon>Eukaryota</taxon>
        <taxon>Metazoa</taxon>
        <taxon>Chordata</taxon>
        <taxon>Craniata</taxon>
        <taxon>Vertebrata</taxon>
        <taxon>Euteleostomi</taxon>
        <taxon>Mammalia</taxon>
        <taxon>Eutheria</taxon>
        <taxon>Euarchontoglires</taxon>
        <taxon>Glires</taxon>
        <taxon>Rodentia</taxon>
        <taxon>Myomorpha</taxon>
        <taxon>Muroidea</taxon>
        <taxon>Muridae</taxon>
        <taxon>Murinae</taxon>
        <taxon>Anisomys</taxon>
    </lineage>
</organism>
<evidence type="ECO:0000250" key="1">
    <source>
        <dbReference type="UniProtKB" id="P00403"/>
    </source>
</evidence>
<evidence type="ECO:0000250" key="2">
    <source>
        <dbReference type="UniProtKB" id="P00410"/>
    </source>
</evidence>
<evidence type="ECO:0000250" key="3">
    <source>
        <dbReference type="UniProtKB" id="P68530"/>
    </source>
</evidence>
<evidence type="ECO:0000305" key="4"/>
<protein>
    <recommendedName>
        <fullName>Cytochrome c oxidase subunit 2</fullName>
        <ecNumber>7.1.1.9</ecNumber>
    </recommendedName>
    <alternativeName>
        <fullName>Cytochrome c oxidase polypeptide II</fullName>
    </alternativeName>
</protein>
<accession>Q38S38</accession>
<keyword id="KW-0186">Copper</keyword>
<keyword id="KW-0249">Electron transport</keyword>
<keyword id="KW-0460">Magnesium</keyword>
<keyword id="KW-0472">Membrane</keyword>
<keyword id="KW-0479">Metal-binding</keyword>
<keyword id="KW-0496">Mitochondrion</keyword>
<keyword id="KW-0999">Mitochondrion inner membrane</keyword>
<keyword id="KW-0679">Respiratory chain</keyword>
<keyword id="KW-1278">Translocase</keyword>
<keyword id="KW-0812">Transmembrane</keyword>
<keyword id="KW-1133">Transmembrane helix</keyword>
<keyword id="KW-0813">Transport</keyword>
<gene>
    <name type="primary">MT-CO2</name>
    <name type="synonym">COII</name>
    <name type="synonym">COXII</name>
    <name type="synonym">MTCO2</name>
</gene>
<reference key="1">
    <citation type="journal article" date="2005" name="Mol. Phylogenet. Evol.">
        <title>Multigene phylogeny of the Old World mice, Murinae, reveals distinct geographic lineages and the declining utility of mitochondrial genes compared to nuclear genes.</title>
        <authorList>
            <person name="Steppan S.J."/>
            <person name="Adkins R.M."/>
            <person name="Spinks P.Q."/>
            <person name="Hale C."/>
        </authorList>
    </citation>
    <scope>NUCLEOTIDE SEQUENCE [GENOMIC DNA]</scope>
</reference>
<sequence length="227" mass="25873">MAYPFQLGLQDATSPIMEELTSFHDHTLMIVFLISSLVLYIILLMLTTKLTHTSTMDAQEVETIWTILPAVILILIALPSLRILYMMDEINNPALTVKTMGHQWYWSYEYTDYEDLCFDSYMIPTNDLKPGELRLLEVDNRVVLPMELPIRMLISSEDVLHSWAVPSLGLKTDAIPGRLNQATVTSNRPGLFYGQCSEICGSNHSFMPIVLEMVPLKHFENWSASMI</sequence>
<comment type="function">
    <text evidence="2">Component of the cytochrome c oxidase, the last enzyme in the mitochondrial electron transport chain which drives oxidative phosphorylation. The respiratory chain contains 3 multisubunit complexes succinate dehydrogenase (complex II, CII), ubiquinol-cytochrome c oxidoreductase (cytochrome b-c1 complex, complex III, CIII) and cytochrome c oxidase (complex IV, CIV), that cooperate to transfer electrons derived from NADH and succinate to molecular oxygen, creating an electrochemical gradient over the inner membrane that drives transmembrane transport and the ATP synthase. Cytochrome c oxidase is the component of the respiratory chain that catalyzes the reduction of oxygen to water. Electrons originating from reduced cytochrome c in the intermembrane space (IMS) are transferred via the dinuclear copper A center (CU(A)) of subunit 2 and heme A of subunit 1 to the active site in subunit 1, a binuclear center (BNC) formed by heme A3 and copper B (CU(B)). The BNC reduces molecular oxygen to 2 water molecules using 4 electrons from cytochrome c in the IMS and 4 protons from the mitochondrial matrix.</text>
</comment>
<comment type="catalytic activity">
    <reaction evidence="2">
        <text>4 Fe(II)-[cytochrome c] + O2 + 8 H(+)(in) = 4 Fe(III)-[cytochrome c] + 2 H2O + 4 H(+)(out)</text>
        <dbReference type="Rhea" id="RHEA:11436"/>
        <dbReference type="Rhea" id="RHEA-COMP:10350"/>
        <dbReference type="Rhea" id="RHEA-COMP:14399"/>
        <dbReference type="ChEBI" id="CHEBI:15377"/>
        <dbReference type="ChEBI" id="CHEBI:15378"/>
        <dbReference type="ChEBI" id="CHEBI:15379"/>
        <dbReference type="ChEBI" id="CHEBI:29033"/>
        <dbReference type="ChEBI" id="CHEBI:29034"/>
        <dbReference type="EC" id="7.1.1.9"/>
    </reaction>
    <physiologicalReaction direction="left-to-right" evidence="2">
        <dbReference type="Rhea" id="RHEA:11437"/>
    </physiologicalReaction>
</comment>
<comment type="cofactor">
    <cofactor evidence="3">
        <name>Cu cation</name>
        <dbReference type="ChEBI" id="CHEBI:23378"/>
    </cofactor>
    <text evidence="3">Binds a dinuclear copper A center per subunit.</text>
</comment>
<comment type="subunit">
    <text evidence="1 3">Component of the cytochrome c oxidase (complex IV, CIV), a multisubunit enzyme composed of 14 subunits. The complex is composed of a catalytic core of 3 subunits MT-CO1, MT-CO2 and MT-CO3, encoded in the mitochondrial DNA, and 11 supernumerary subunits COX4I, COX5A, COX5B, COX6A, COX6B, COX6C, COX7A, COX7B, COX7C, COX8 and NDUFA4, which are encoded in the nuclear genome. The complex exists as a monomer or a dimer and forms supercomplexes (SCs) in the inner mitochondrial membrane with NADH-ubiquinone oxidoreductase (complex I, CI) and ubiquinol-cytochrome c oxidoreductase (cytochrome b-c1 complex, complex III, CIII), resulting in different assemblies (supercomplex SCI(1)III(2)IV(1) and megacomplex MCI(2)III(2)IV(2)) (By similarity). Found in a complex with TMEM177, COA6, COX18, COX20, SCO1 and SCO2. Interacts with TMEM177 in a COX20-dependent manner. Interacts with COX20. Interacts with COX16 (By similarity).</text>
</comment>
<comment type="subcellular location">
    <subcellularLocation>
        <location evidence="3">Mitochondrion inner membrane</location>
        <topology evidence="3">Multi-pass membrane protein</topology>
    </subcellularLocation>
</comment>
<comment type="similarity">
    <text evidence="4">Belongs to the cytochrome c oxidase subunit 2 family.</text>
</comment>
<geneLocation type="mitochondrion"/>
<feature type="chain" id="PRO_0000254912" description="Cytochrome c oxidase subunit 2">
    <location>
        <begin position="1"/>
        <end position="227"/>
    </location>
</feature>
<feature type="topological domain" description="Mitochondrial intermembrane" evidence="3">
    <location>
        <begin position="1"/>
        <end position="14"/>
    </location>
</feature>
<feature type="transmembrane region" description="Helical; Name=I" evidence="3">
    <location>
        <begin position="15"/>
        <end position="45"/>
    </location>
</feature>
<feature type="topological domain" description="Mitochondrial matrix" evidence="3">
    <location>
        <begin position="46"/>
        <end position="59"/>
    </location>
</feature>
<feature type="transmembrane region" description="Helical; Name=II" evidence="3">
    <location>
        <begin position="60"/>
        <end position="87"/>
    </location>
</feature>
<feature type="topological domain" description="Mitochondrial intermembrane" evidence="3">
    <location>
        <begin position="88"/>
        <end position="227"/>
    </location>
</feature>
<feature type="binding site" evidence="3">
    <location>
        <position position="161"/>
    </location>
    <ligand>
        <name>Cu cation</name>
        <dbReference type="ChEBI" id="CHEBI:23378"/>
        <label>A1</label>
    </ligand>
</feature>
<feature type="binding site" evidence="3">
    <location>
        <position position="196"/>
    </location>
    <ligand>
        <name>Cu cation</name>
        <dbReference type="ChEBI" id="CHEBI:23378"/>
        <label>A1</label>
    </ligand>
</feature>
<feature type="binding site" evidence="3">
    <location>
        <position position="196"/>
    </location>
    <ligand>
        <name>Cu cation</name>
        <dbReference type="ChEBI" id="CHEBI:23378"/>
        <label>A2</label>
    </ligand>
</feature>
<feature type="binding site" evidence="3">
    <location>
        <position position="198"/>
    </location>
    <ligand>
        <name>Cu cation</name>
        <dbReference type="ChEBI" id="CHEBI:23378"/>
        <label>A2</label>
    </ligand>
</feature>
<feature type="binding site" evidence="3">
    <location>
        <position position="198"/>
    </location>
    <ligand>
        <name>Mg(2+)</name>
        <dbReference type="ChEBI" id="CHEBI:18420"/>
        <note>ligand shared with MT-CO1</note>
    </ligand>
</feature>
<feature type="binding site" evidence="3">
    <location>
        <position position="200"/>
    </location>
    <ligand>
        <name>Cu cation</name>
        <dbReference type="ChEBI" id="CHEBI:23378"/>
        <label>A1</label>
    </ligand>
</feature>
<feature type="binding site" evidence="3">
    <location>
        <position position="200"/>
    </location>
    <ligand>
        <name>Cu cation</name>
        <dbReference type="ChEBI" id="CHEBI:23378"/>
        <label>A2</label>
    </ligand>
</feature>
<feature type="binding site" evidence="3">
    <location>
        <position position="204"/>
    </location>
    <ligand>
        <name>Cu cation</name>
        <dbReference type="ChEBI" id="CHEBI:23378"/>
        <label>A2</label>
    </ligand>
</feature>
<feature type="binding site" evidence="3">
    <location>
        <position position="207"/>
    </location>
    <ligand>
        <name>Cu cation</name>
        <dbReference type="ChEBI" id="CHEBI:23378"/>
        <label>A1</label>
    </ligand>
</feature>